<name>ATPA_STRP2</name>
<comment type="function">
    <text evidence="1">Produces ATP from ADP in the presence of a proton gradient across the membrane. The alpha chain is a regulatory subunit.</text>
</comment>
<comment type="catalytic activity">
    <reaction evidence="1">
        <text>ATP + H2O + 4 H(+)(in) = ADP + phosphate + 5 H(+)(out)</text>
        <dbReference type="Rhea" id="RHEA:57720"/>
        <dbReference type="ChEBI" id="CHEBI:15377"/>
        <dbReference type="ChEBI" id="CHEBI:15378"/>
        <dbReference type="ChEBI" id="CHEBI:30616"/>
        <dbReference type="ChEBI" id="CHEBI:43474"/>
        <dbReference type="ChEBI" id="CHEBI:456216"/>
        <dbReference type="EC" id="7.1.2.2"/>
    </reaction>
</comment>
<comment type="subunit">
    <text evidence="1">F-type ATPases have 2 components, CF(1) - the catalytic core - and CF(0) - the membrane proton channel. CF(1) has five subunits: alpha(3), beta(3), gamma(1), delta(1), epsilon(1). CF(0) has three main subunits: a(1), b(2) and c(9-12). The alpha and beta chains form an alternating ring which encloses part of the gamma chain. CF(1) is attached to CF(0) by a central stalk formed by the gamma and epsilon chains, while a peripheral stalk is formed by the delta and b chains.</text>
</comment>
<comment type="subcellular location">
    <subcellularLocation>
        <location evidence="1">Cell membrane</location>
        <topology evidence="1">Peripheral membrane protein</topology>
    </subcellularLocation>
</comment>
<comment type="similarity">
    <text evidence="1">Belongs to the ATPase alpha/beta chains family.</text>
</comment>
<sequence length="501" mass="54671">MAINAQEISALIKQQIENFKPNFDVTETGVVTYIGDGIARAHGLENVMSGELLNFENGSYGMAQNLESTDVGIIILGDFTDIREGDTIRRTGKIMEVPVGESLIGRVVDPLGRPVDGLGEIHTDKTRPVEAPAPGVMQRKSVSEPLQTGLKAIDALVPIGRGQRELIIGDRQTGKTTIAIDTILNQKDQDMICIYVAIGQKESTVRTQVETLRQYGALDYTIVVTASASQPSPLLFLAPYAGVAMAEEFMYQGKHVLIVYDDLSKQAVAYRELLLLLRRPPGREAFPGDVFYLHSRLLERSAKVSDELGGGSITALPFIETQAGDISAYIATNVISITDGQIFLGDGLFNAGIRPAIDAGSSVSRVGGSAQIKAMKKVAGTLRIDLASYRELEAFTKFGSDLDAATQAKLNRGRRTVEVLKQPVHKPLPVEKQVTILYALTHGFLDTVPVDDIVRFEEEFHAFFDAQHPEILETIRDTKDLPEEAVLDAAITEFLNQSSFQ</sequence>
<accession>Q04HT7</accession>
<protein>
    <recommendedName>
        <fullName evidence="1">ATP synthase subunit alpha</fullName>
        <ecNumber evidence="1">7.1.2.2</ecNumber>
    </recommendedName>
    <alternativeName>
        <fullName evidence="1">ATP synthase F1 sector subunit alpha</fullName>
    </alternativeName>
    <alternativeName>
        <fullName evidence="1">F-ATPase subunit alpha</fullName>
    </alternativeName>
</protein>
<proteinExistence type="inferred from homology"/>
<reference key="1">
    <citation type="journal article" date="2007" name="J. Bacteriol.">
        <title>Genome sequence of Avery's virulent serotype 2 strain D39 of Streptococcus pneumoniae and comparison with that of unencapsulated laboratory strain R6.</title>
        <authorList>
            <person name="Lanie J.A."/>
            <person name="Ng W.-L."/>
            <person name="Kazmierczak K.M."/>
            <person name="Andrzejewski T.M."/>
            <person name="Davidsen T.M."/>
            <person name="Wayne K.J."/>
            <person name="Tettelin H."/>
            <person name="Glass J.I."/>
            <person name="Winkler M.E."/>
        </authorList>
    </citation>
    <scope>NUCLEOTIDE SEQUENCE [LARGE SCALE GENOMIC DNA]</scope>
    <source>
        <strain>D39 / NCTC 7466</strain>
    </source>
</reference>
<organism>
    <name type="scientific">Streptococcus pneumoniae serotype 2 (strain D39 / NCTC 7466)</name>
    <dbReference type="NCBI Taxonomy" id="373153"/>
    <lineage>
        <taxon>Bacteria</taxon>
        <taxon>Bacillati</taxon>
        <taxon>Bacillota</taxon>
        <taxon>Bacilli</taxon>
        <taxon>Lactobacillales</taxon>
        <taxon>Streptococcaceae</taxon>
        <taxon>Streptococcus</taxon>
    </lineage>
</organism>
<evidence type="ECO:0000255" key="1">
    <source>
        <dbReference type="HAMAP-Rule" id="MF_01346"/>
    </source>
</evidence>
<gene>
    <name evidence="1" type="primary">atpA</name>
    <name type="ordered locus">SPD_1337</name>
</gene>
<feature type="chain" id="PRO_0000302705" description="ATP synthase subunit alpha">
    <location>
        <begin position="1"/>
        <end position="501"/>
    </location>
</feature>
<feature type="binding site" evidence="1">
    <location>
        <begin position="169"/>
        <end position="176"/>
    </location>
    <ligand>
        <name>ATP</name>
        <dbReference type="ChEBI" id="CHEBI:30616"/>
    </ligand>
</feature>
<feature type="site" description="Required for activity" evidence="1">
    <location>
        <position position="362"/>
    </location>
</feature>
<keyword id="KW-0066">ATP synthesis</keyword>
<keyword id="KW-0067">ATP-binding</keyword>
<keyword id="KW-1003">Cell membrane</keyword>
<keyword id="KW-0139">CF(1)</keyword>
<keyword id="KW-0375">Hydrogen ion transport</keyword>
<keyword id="KW-0406">Ion transport</keyword>
<keyword id="KW-0472">Membrane</keyword>
<keyword id="KW-0547">Nucleotide-binding</keyword>
<keyword id="KW-1185">Reference proteome</keyword>
<keyword id="KW-1278">Translocase</keyword>
<keyword id="KW-0813">Transport</keyword>
<dbReference type="EC" id="7.1.2.2" evidence="1"/>
<dbReference type="EMBL" id="CP000410">
    <property type="protein sequence ID" value="ABJ55505.1"/>
    <property type="molecule type" value="Genomic_DNA"/>
</dbReference>
<dbReference type="RefSeq" id="WP_000996638.1">
    <property type="nucleotide sequence ID" value="NC_008533.2"/>
</dbReference>
<dbReference type="SMR" id="Q04HT7"/>
<dbReference type="PaxDb" id="373153-SPD_1337"/>
<dbReference type="KEGG" id="spd:SPD_1337"/>
<dbReference type="eggNOG" id="COG0056">
    <property type="taxonomic scope" value="Bacteria"/>
</dbReference>
<dbReference type="HOGENOM" id="CLU_010091_2_1_9"/>
<dbReference type="BioCyc" id="SPNE373153:G1G6V-1442-MONOMER"/>
<dbReference type="Proteomes" id="UP000001452">
    <property type="component" value="Chromosome"/>
</dbReference>
<dbReference type="GO" id="GO:0005886">
    <property type="term" value="C:plasma membrane"/>
    <property type="evidence" value="ECO:0007669"/>
    <property type="project" value="UniProtKB-SubCell"/>
</dbReference>
<dbReference type="GO" id="GO:0045259">
    <property type="term" value="C:proton-transporting ATP synthase complex"/>
    <property type="evidence" value="ECO:0007669"/>
    <property type="project" value="UniProtKB-KW"/>
</dbReference>
<dbReference type="GO" id="GO:0043531">
    <property type="term" value="F:ADP binding"/>
    <property type="evidence" value="ECO:0007669"/>
    <property type="project" value="TreeGrafter"/>
</dbReference>
<dbReference type="GO" id="GO:0005524">
    <property type="term" value="F:ATP binding"/>
    <property type="evidence" value="ECO:0007669"/>
    <property type="project" value="UniProtKB-UniRule"/>
</dbReference>
<dbReference type="GO" id="GO:0046933">
    <property type="term" value="F:proton-transporting ATP synthase activity, rotational mechanism"/>
    <property type="evidence" value="ECO:0007669"/>
    <property type="project" value="UniProtKB-UniRule"/>
</dbReference>
<dbReference type="CDD" id="cd18113">
    <property type="entry name" value="ATP-synt_F1_alpha_C"/>
    <property type="match status" value="1"/>
</dbReference>
<dbReference type="CDD" id="cd18116">
    <property type="entry name" value="ATP-synt_F1_alpha_N"/>
    <property type="match status" value="1"/>
</dbReference>
<dbReference type="CDD" id="cd01132">
    <property type="entry name" value="F1-ATPase_alpha_CD"/>
    <property type="match status" value="1"/>
</dbReference>
<dbReference type="FunFam" id="1.20.150.20:FF:000001">
    <property type="entry name" value="ATP synthase subunit alpha"/>
    <property type="match status" value="1"/>
</dbReference>
<dbReference type="FunFam" id="2.40.30.20:FF:000001">
    <property type="entry name" value="ATP synthase subunit alpha"/>
    <property type="match status" value="1"/>
</dbReference>
<dbReference type="FunFam" id="3.40.50.300:FF:000002">
    <property type="entry name" value="ATP synthase subunit alpha"/>
    <property type="match status" value="1"/>
</dbReference>
<dbReference type="Gene3D" id="2.40.30.20">
    <property type="match status" value="1"/>
</dbReference>
<dbReference type="Gene3D" id="1.20.150.20">
    <property type="entry name" value="ATP synthase alpha/beta chain, C-terminal domain"/>
    <property type="match status" value="1"/>
</dbReference>
<dbReference type="Gene3D" id="3.40.50.300">
    <property type="entry name" value="P-loop containing nucleotide triphosphate hydrolases"/>
    <property type="match status" value="1"/>
</dbReference>
<dbReference type="HAMAP" id="MF_01346">
    <property type="entry name" value="ATP_synth_alpha_bact"/>
    <property type="match status" value="1"/>
</dbReference>
<dbReference type="InterPro" id="IPR023366">
    <property type="entry name" value="ATP_synth_asu-like_sf"/>
</dbReference>
<dbReference type="InterPro" id="IPR000793">
    <property type="entry name" value="ATP_synth_asu_C"/>
</dbReference>
<dbReference type="InterPro" id="IPR038376">
    <property type="entry name" value="ATP_synth_asu_C_sf"/>
</dbReference>
<dbReference type="InterPro" id="IPR033732">
    <property type="entry name" value="ATP_synth_F1_a_nt-bd_dom"/>
</dbReference>
<dbReference type="InterPro" id="IPR005294">
    <property type="entry name" value="ATP_synth_F1_asu"/>
</dbReference>
<dbReference type="InterPro" id="IPR004100">
    <property type="entry name" value="ATPase_F1/V1/A1_a/bsu_N"/>
</dbReference>
<dbReference type="InterPro" id="IPR036121">
    <property type="entry name" value="ATPase_F1/V1/A1_a/bsu_N_sf"/>
</dbReference>
<dbReference type="InterPro" id="IPR000194">
    <property type="entry name" value="ATPase_F1/V1/A1_a/bsu_nucl-bd"/>
</dbReference>
<dbReference type="InterPro" id="IPR027417">
    <property type="entry name" value="P-loop_NTPase"/>
</dbReference>
<dbReference type="NCBIfam" id="TIGR00962">
    <property type="entry name" value="atpA"/>
    <property type="match status" value="1"/>
</dbReference>
<dbReference type="NCBIfam" id="NF009884">
    <property type="entry name" value="PRK13343.1"/>
    <property type="match status" value="1"/>
</dbReference>
<dbReference type="PANTHER" id="PTHR48082">
    <property type="entry name" value="ATP SYNTHASE SUBUNIT ALPHA, MITOCHONDRIAL"/>
    <property type="match status" value="1"/>
</dbReference>
<dbReference type="PANTHER" id="PTHR48082:SF2">
    <property type="entry name" value="ATP SYNTHASE SUBUNIT ALPHA, MITOCHONDRIAL"/>
    <property type="match status" value="1"/>
</dbReference>
<dbReference type="Pfam" id="PF00006">
    <property type="entry name" value="ATP-synt_ab"/>
    <property type="match status" value="1"/>
</dbReference>
<dbReference type="Pfam" id="PF00306">
    <property type="entry name" value="ATP-synt_ab_C"/>
    <property type="match status" value="1"/>
</dbReference>
<dbReference type="Pfam" id="PF02874">
    <property type="entry name" value="ATP-synt_ab_N"/>
    <property type="match status" value="1"/>
</dbReference>
<dbReference type="PIRSF" id="PIRSF039088">
    <property type="entry name" value="F_ATPase_subunit_alpha"/>
    <property type="match status" value="1"/>
</dbReference>
<dbReference type="SUPFAM" id="SSF47917">
    <property type="entry name" value="C-terminal domain of alpha and beta subunits of F1 ATP synthase"/>
    <property type="match status" value="1"/>
</dbReference>
<dbReference type="SUPFAM" id="SSF50615">
    <property type="entry name" value="N-terminal domain of alpha and beta subunits of F1 ATP synthase"/>
    <property type="match status" value="1"/>
</dbReference>
<dbReference type="SUPFAM" id="SSF52540">
    <property type="entry name" value="P-loop containing nucleoside triphosphate hydrolases"/>
    <property type="match status" value="1"/>
</dbReference>